<keyword id="KW-0326">Glycosidase</keyword>
<keyword id="KW-0378">Hydrolase</keyword>
<keyword id="KW-0520">NAD</keyword>
<keyword id="KW-1185">Reference proteome</keyword>
<keyword id="KW-0732">Signal</keyword>
<comment type="function">
    <text evidence="1">Glycosidase.</text>
</comment>
<comment type="cofactor">
    <cofactor evidence="1">
        <name>NAD(+)</name>
        <dbReference type="ChEBI" id="CHEBI:57540"/>
    </cofactor>
    <text evidence="1">Binds 1 NAD(+) per subunit. The NAD(+) cannot dissociate.</text>
</comment>
<comment type="PTM">
    <text>Predicted to be exported by the Tat system. The position of the signal peptide cleavage has not been experimentally proven.</text>
</comment>
<comment type="similarity">
    <text evidence="3">Belongs to the Gfo/Idh/MocA family. Glycosyl hydrolase 109 subfamily.</text>
</comment>
<reference key="1">
    <citation type="submission" date="2007-10" db="EMBL/GenBank/DDBJ databases">
        <title>Complete sequence of Shewanella pealeana ATCC 700345.</title>
        <authorList>
            <consortium name="US DOE Joint Genome Institute"/>
            <person name="Copeland A."/>
            <person name="Lucas S."/>
            <person name="Lapidus A."/>
            <person name="Barry K."/>
            <person name="Glavina del Rio T."/>
            <person name="Dalin E."/>
            <person name="Tice H."/>
            <person name="Pitluck S."/>
            <person name="Chertkov O."/>
            <person name="Brettin T."/>
            <person name="Bruce D."/>
            <person name="Detter J.C."/>
            <person name="Han C."/>
            <person name="Schmutz J."/>
            <person name="Larimer F."/>
            <person name="Land M."/>
            <person name="Hauser L."/>
            <person name="Kyrpides N."/>
            <person name="Kim E."/>
            <person name="Zhao J.-S.Z."/>
            <person name="Manno D."/>
            <person name="Hawari J."/>
            <person name="Richardson P."/>
        </authorList>
    </citation>
    <scope>NUCLEOTIDE SEQUENCE [LARGE SCALE GENOMIC DNA]</scope>
    <source>
        <strain>ATCC 700345 / ANG-SQ1</strain>
    </source>
</reference>
<proteinExistence type="inferred from homology"/>
<sequence length="456" mass="51367">MKLNRRHFLKTAGLSAAGILTSQLPLSSAEAVPKKPAAGPSVMGLVVPKMDTVRVGFIGVGQRGSGHVKHFCHLDGVEIKAICDTDPQVLDESIQFVTTQGLPKPAQYTGSEQAYKDLLNRDDIDIVIISTPWEWHAPMAINTMESGKHAFVEVPLALTVDECWQIVDTAERTQKNCMMMENVNYGRDELMVLNMVRQGLFGELLHGEAAYIHELRWQMKEIDSKTGSWRTYWHTKRNGNLYPTHGLGPVSQYMNINRGDRFDYLTSMSSPALGRGLYAKREFPADHERNQLDYINGDINTSLIKTVKGRTIMVQHDTTTPRPYSRHNLIQGTNGVFAGFPNRIAIEQAGSDSYHKWDMDMAKWYAKYDHPLWLQMGQEAERNGGHGGMDFLMLWRMVYCLRNSEPLDQDVYDGTAWSVVNILSQESVNNRSNSVNFPDFTRGAWKTGKPLGIIGT</sequence>
<evidence type="ECO:0000250" key="1"/>
<evidence type="ECO:0000255" key="2">
    <source>
        <dbReference type="PROSITE-ProRule" id="PRU00648"/>
    </source>
</evidence>
<evidence type="ECO:0000305" key="3"/>
<protein>
    <recommendedName>
        <fullName>Glycosyl hydrolase family 109 protein</fullName>
        <ecNumber>3.2.1.-</ecNumber>
    </recommendedName>
</protein>
<dbReference type="EC" id="3.2.1.-"/>
<dbReference type="EMBL" id="CP000851">
    <property type="protein sequence ID" value="ABV86790.1"/>
    <property type="molecule type" value="Genomic_DNA"/>
</dbReference>
<dbReference type="RefSeq" id="WP_012154716.1">
    <property type="nucleotide sequence ID" value="NC_009901.1"/>
</dbReference>
<dbReference type="SMR" id="A8H2K3"/>
<dbReference type="STRING" id="398579.Spea_1465"/>
<dbReference type="CAZy" id="GH109">
    <property type="family name" value="Glycoside Hydrolase Family 109"/>
</dbReference>
<dbReference type="KEGG" id="spl:Spea_1465"/>
<dbReference type="eggNOG" id="COG0673">
    <property type="taxonomic scope" value="Bacteria"/>
</dbReference>
<dbReference type="HOGENOM" id="CLU_046965_0_0_6"/>
<dbReference type="OrthoDB" id="9792935at2"/>
<dbReference type="Proteomes" id="UP000002608">
    <property type="component" value="Chromosome"/>
</dbReference>
<dbReference type="GO" id="GO:0016798">
    <property type="term" value="F:hydrolase activity, acting on glycosyl bonds"/>
    <property type="evidence" value="ECO:0007669"/>
    <property type="project" value="UniProtKB-KW"/>
</dbReference>
<dbReference type="GO" id="GO:0000166">
    <property type="term" value="F:nucleotide binding"/>
    <property type="evidence" value="ECO:0007669"/>
    <property type="project" value="InterPro"/>
</dbReference>
<dbReference type="Gene3D" id="3.30.360.10">
    <property type="entry name" value="Dihydrodipicolinate Reductase, domain 2"/>
    <property type="match status" value="1"/>
</dbReference>
<dbReference type="Gene3D" id="3.40.50.720">
    <property type="entry name" value="NAD(P)-binding Rossmann-like Domain"/>
    <property type="match status" value="1"/>
</dbReference>
<dbReference type="InterPro" id="IPR000683">
    <property type="entry name" value="Gfo/Idh/MocA-like_OxRdtase_N"/>
</dbReference>
<dbReference type="InterPro" id="IPR050463">
    <property type="entry name" value="Gfo/Idh/MocA_oxidrdct_glycsds"/>
</dbReference>
<dbReference type="InterPro" id="IPR049303">
    <property type="entry name" value="Glyco_hydro_109_C"/>
</dbReference>
<dbReference type="InterPro" id="IPR036291">
    <property type="entry name" value="NAD(P)-bd_dom_sf"/>
</dbReference>
<dbReference type="InterPro" id="IPR006311">
    <property type="entry name" value="TAT_signal"/>
</dbReference>
<dbReference type="PANTHER" id="PTHR43818">
    <property type="entry name" value="BCDNA.GH03377"/>
    <property type="match status" value="1"/>
</dbReference>
<dbReference type="PANTHER" id="PTHR43818:SF1">
    <property type="entry name" value="GLYCOSYL HYDROLASE FAMILY 109 PROTEIN"/>
    <property type="match status" value="1"/>
</dbReference>
<dbReference type="Pfam" id="PF01408">
    <property type="entry name" value="GFO_IDH_MocA"/>
    <property type="match status" value="1"/>
</dbReference>
<dbReference type="Pfam" id="PF21252">
    <property type="entry name" value="Glyco_hydro_109_C"/>
    <property type="match status" value="1"/>
</dbReference>
<dbReference type="SUPFAM" id="SSF51735">
    <property type="entry name" value="NAD(P)-binding Rossmann-fold domains"/>
    <property type="match status" value="1"/>
</dbReference>
<dbReference type="PROSITE" id="PS51318">
    <property type="entry name" value="TAT"/>
    <property type="match status" value="1"/>
</dbReference>
<organism>
    <name type="scientific">Shewanella pealeana (strain ATCC 700345 / ANG-SQ1)</name>
    <dbReference type="NCBI Taxonomy" id="398579"/>
    <lineage>
        <taxon>Bacteria</taxon>
        <taxon>Pseudomonadati</taxon>
        <taxon>Pseudomonadota</taxon>
        <taxon>Gammaproteobacteria</taxon>
        <taxon>Alteromonadales</taxon>
        <taxon>Shewanellaceae</taxon>
        <taxon>Shewanella</taxon>
    </lineage>
</organism>
<feature type="signal peptide" description="Tat-type signal" evidence="2">
    <location>
        <begin position="1"/>
        <end position="31"/>
    </location>
</feature>
<feature type="chain" id="PRO_0000348562" description="Glycosyl hydrolase family 109 protein">
    <location>
        <begin position="32"/>
        <end position="456"/>
    </location>
</feature>
<feature type="binding site" evidence="1">
    <location>
        <begin position="62"/>
        <end position="63"/>
    </location>
    <ligand>
        <name>NAD(+)</name>
        <dbReference type="ChEBI" id="CHEBI:57540"/>
    </ligand>
</feature>
<feature type="binding site" evidence="1">
    <location>
        <position position="84"/>
    </location>
    <ligand>
        <name>NAD(+)</name>
        <dbReference type="ChEBI" id="CHEBI:57540"/>
    </ligand>
</feature>
<feature type="binding site" evidence="1">
    <location>
        <begin position="133"/>
        <end position="136"/>
    </location>
    <ligand>
        <name>NAD(+)</name>
        <dbReference type="ChEBI" id="CHEBI:57540"/>
    </ligand>
</feature>
<feature type="binding site" evidence="1">
    <location>
        <begin position="153"/>
        <end position="154"/>
    </location>
    <ligand>
        <name>NAD(+)</name>
        <dbReference type="ChEBI" id="CHEBI:57540"/>
    </ligand>
</feature>
<feature type="binding site" evidence="1">
    <location>
        <position position="182"/>
    </location>
    <ligand>
        <name>NAD(+)</name>
        <dbReference type="ChEBI" id="CHEBI:57540"/>
    </ligand>
</feature>
<feature type="binding site" evidence="1">
    <location>
        <position position="211"/>
    </location>
    <ligand>
        <name>substrate</name>
    </ligand>
</feature>
<feature type="binding site" evidence="1">
    <location>
        <position position="230"/>
    </location>
    <ligand>
        <name>substrate</name>
    </ligand>
</feature>
<feature type="binding site" evidence="1">
    <location>
        <begin position="242"/>
        <end position="245"/>
    </location>
    <ligand>
        <name>substrate</name>
    </ligand>
</feature>
<feature type="binding site" evidence="1">
    <location>
        <position position="242"/>
    </location>
    <ligand>
        <name>NAD(+)</name>
        <dbReference type="ChEBI" id="CHEBI:57540"/>
    </ligand>
</feature>
<feature type="binding site" evidence="1">
    <location>
        <position position="324"/>
    </location>
    <ligand>
        <name>substrate</name>
    </ligand>
</feature>
<name>GH109_SHEPA</name>
<accession>A8H2K3</accession>
<gene>
    <name type="ordered locus">Spea_1465</name>
</gene>